<evidence type="ECO:0000250" key="1">
    <source>
        <dbReference type="UniProtKB" id="Q47098"/>
    </source>
</evidence>
<evidence type="ECO:0000269" key="2">
    <source ref="2"/>
</evidence>
<evidence type="ECO:0000303" key="3">
    <source ref="2"/>
</evidence>
<evidence type="ECO:0000305" key="4"/>
<evidence type="ECO:0000312" key="5">
    <source>
        <dbReference type="EMBL" id="ABC91080.1"/>
    </source>
</evidence>
<comment type="function">
    <text evidence="2">Aldolase which can catalyze in vitro the aldolisation reaction between pyruvate (PA) and D-glyceraldehyde (D-GA) to form 2-dehydro-3-deoxy-L-galactonate.</text>
</comment>
<comment type="catalytic activity">
    <reaction evidence="2">
        <text>D-glyceraldehyde + pyruvate = 2-dehydro-3-deoxy-L-galactonate</text>
        <dbReference type="Rhea" id="RHEA:80055"/>
        <dbReference type="ChEBI" id="CHEBI:15361"/>
        <dbReference type="ChEBI" id="CHEBI:17378"/>
        <dbReference type="ChEBI" id="CHEBI:75545"/>
    </reaction>
</comment>
<comment type="cofactor">
    <cofactor evidence="1">
        <name>a divalent metal cation</name>
        <dbReference type="ChEBI" id="CHEBI:60240"/>
    </cofactor>
</comment>
<comment type="similarity">
    <text evidence="4">Belongs to the HpcH/HpaI aldolase family.</text>
</comment>
<gene>
    <name evidence="5" type="ordered locus">RHE_CH02300</name>
</gene>
<name>PAAL_RHIEC</name>
<feature type="chain" id="PRO_0000460960" description="Pyruvate aldolase">
    <location>
        <begin position="1"/>
        <end position="254"/>
    </location>
</feature>
<feature type="active site" description="Proton acceptor" evidence="1">
    <location>
        <position position="48"/>
    </location>
</feature>
<feature type="binding site" evidence="1">
    <location>
        <position position="151"/>
    </location>
    <ligand>
        <name>a divalent metal cation</name>
        <dbReference type="ChEBI" id="CHEBI:60240"/>
    </ligand>
</feature>
<feature type="binding site" evidence="1">
    <location>
        <position position="177"/>
    </location>
    <ligand>
        <name>a divalent metal cation</name>
        <dbReference type="ChEBI" id="CHEBI:60240"/>
    </ligand>
</feature>
<feature type="site" description="Transition state stabilizer" evidence="1">
    <location>
        <position position="73"/>
    </location>
</feature>
<feature type="site" description="Increases basicity of active site His" evidence="1">
    <location>
        <position position="87"/>
    </location>
</feature>
<keyword id="KW-0456">Lyase</keyword>
<keyword id="KW-0479">Metal-binding</keyword>
<keyword id="KW-0670">Pyruvate</keyword>
<keyword id="KW-1185">Reference proteome</keyword>
<protein>
    <recommendedName>
        <fullName evidence="3">Pyruvate aldolase</fullName>
        <shortName evidence="3">PA aldolase</shortName>
        <ecNumber evidence="2">4.1.2.-</ecNumber>
    </recommendedName>
</protein>
<proteinExistence type="evidence at protein level"/>
<accession>Q2K7V6</accession>
<sequence>MELPVNHFKRKLRAGKSQIGLWCGLPGSYAAEIVAPAGFDWVLFDTEHSPSDVLTVLPQLQAVAPYDVSPVVRPASNDPVLIKRFLDIGVQTLLVPYVQNEEEAKAAVAAIRYPPHGVRGVSALTRATRFGRVPNYARIAEQEICLLLQIETREALGRLEAIATVEGVDGVFIGPADLAASFGHPGQPGHPEVVAAIEDAIGRLKILGKPAGILTPDETFAARCISLGTSFTAVGVDIALLARGSEALAARFAT</sequence>
<organism>
    <name type="scientific">Rhizobium etli (strain ATCC 51251 / DSM 11541 / JCM 21823 / NBRC 15573 / CFN 42)</name>
    <dbReference type="NCBI Taxonomy" id="347834"/>
    <lineage>
        <taxon>Bacteria</taxon>
        <taxon>Pseudomonadati</taxon>
        <taxon>Pseudomonadota</taxon>
        <taxon>Alphaproteobacteria</taxon>
        <taxon>Hyphomicrobiales</taxon>
        <taxon>Rhizobiaceae</taxon>
        <taxon>Rhizobium/Agrobacterium group</taxon>
        <taxon>Rhizobium</taxon>
    </lineage>
</organism>
<reference key="1">
    <citation type="journal article" date="2006" name="Proc. Natl. Acad. Sci. U.S.A.">
        <title>The partitioned Rhizobium etli genome: genetic and metabolic redundancy in seven interacting replicons.</title>
        <authorList>
            <person name="Gonzalez V."/>
            <person name="Santamaria R.I."/>
            <person name="Bustos P."/>
            <person name="Hernandez-Gonzalez I."/>
            <person name="Medrano-Soto A."/>
            <person name="Moreno-Hagelsieb G."/>
            <person name="Janga S.C."/>
            <person name="Ramirez M.A."/>
            <person name="Jimenez-Jacinto V."/>
            <person name="Collado-Vides J."/>
            <person name="Davila G."/>
        </authorList>
    </citation>
    <scope>NUCLEOTIDE SEQUENCE [LARGE SCALE GENOMIC DNA]</scope>
    <source>
        <strain>ATCC 51251 / DSM 11541 / JCM 21823 / NBRC 15573 / CFN 42</strain>
    </source>
</reference>
<reference key="2">
    <citation type="journal article" date="2017" name="Green Chem.">
        <title>Expanding the reaction space of aldolases using hydroxypyruvate as a nucleophilic substrate.</title>
        <authorList>
            <person name="de Berardinis V."/>
            <person name="Guerard-Helaine C."/>
            <person name="Darii E."/>
            <person name="Bastard K."/>
            <person name="Helaine V."/>
            <person name="Mariage A."/>
            <person name="Petit J.-L."/>
            <person name="Poupard N."/>
            <person name="Sanchez-Moreno I."/>
            <person name="Stam M."/>
            <person name="Gefflaut T."/>
            <person name="Salanoubat M."/>
            <person name="Lemaire M."/>
        </authorList>
    </citation>
    <scope>FUNCTION</scope>
    <scope>CATALYTIC ACTIVITY</scope>
</reference>
<dbReference type="EC" id="4.1.2.-" evidence="2"/>
<dbReference type="EMBL" id="CP000133">
    <property type="protein sequence ID" value="ABC91080.1"/>
    <property type="molecule type" value="Genomic_DNA"/>
</dbReference>
<dbReference type="RefSeq" id="WP_011425560.1">
    <property type="nucleotide sequence ID" value="NC_007761.1"/>
</dbReference>
<dbReference type="SMR" id="Q2K7V6"/>
<dbReference type="KEGG" id="ret:RHE_CH02300"/>
<dbReference type="eggNOG" id="COG3836">
    <property type="taxonomic scope" value="Bacteria"/>
</dbReference>
<dbReference type="HOGENOM" id="CLU_059964_1_0_5"/>
<dbReference type="OrthoDB" id="9802624at2"/>
<dbReference type="Proteomes" id="UP000001936">
    <property type="component" value="Chromosome"/>
</dbReference>
<dbReference type="GO" id="GO:0005737">
    <property type="term" value="C:cytoplasm"/>
    <property type="evidence" value="ECO:0007669"/>
    <property type="project" value="TreeGrafter"/>
</dbReference>
<dbReference type="GO" id="GO:0016832">
    <property type="term" value="F:aldehyde-lyase activity"/>
    <property type="evidence" value="ECO:0007669"/>
    <property type="project" value="TreeGrafter"/>
</dbReference>
<dbReference type="GO" id="GO:0046872">
    <property type="term" value="F:metal ion binding"/>
    <property type="evidence" value="ECO:0007669"/>
    <property type="project" value="UniProtKB-KW"/>
</dbReference>
<dbReference type="GO" id="GO:0010124">
    <property type="term" value="P:phenylacetate catabolic process"/>
    <property type="evidence" value="ECO:0007669"/>
    <property type="project" value="InterPro"/>
</dbReference>
<dbReference type="FunFam" id="3.20.20.60:FF:000004">
    <property type="entry name" value="5-keto-4-deoxy-D-glucarate aldolase"/>
    <property type="match status" value="1"/>
</dbReference>
<dbReference type="Gene3D" id="3.20.20.60">
    <property type="entry name" value="Phosphoenolpyruvate-binding domains"/>
    <property type="match status" value="1"/>
</dbReference>
<dbReference type="InterPro" id="IPR005000">
    <property type="entry name" value="Aldolase/citrate-lyase_domain"/>
</dbReference>
<dbReference type="InterPro" id="IPR012689">
    <property type="entry name" value="HpaI"/>
</dbReference>
<dbReference type="InterPro" id="IPR050251">
    <property type="entry name" value="HpcH-HpaI_aldolase"/>
</dbReference>
<dbReference type="InterPro" id="IPR015813">
    <property type="entry name" value="Pyrv/PenolPyrv_kinase-like_dom"/>
</dbReference>
<dbReference type="InterPro" id="IPR040442">
    <property type="entry name" value="Pyrv_kinase-like_dom_sf"/>
</dbReference>
<dbReference type="NCBIfam" id="TIGR02311">
    <property type="entry name" value="HpaI"/>
    <property type="match status" value="1"/>
</dbReference>
<dbReference type="PANTHER" id="PTHR30502">
    <property type="entry name" value="2-KETO-3-DEOXY-L-RHAMNONATE ALDOLASE"/>
    <property type="match status" value="1"/>
</dbReference>
<dbReference type="PANTHER" id="PTHR30502:SF0">
    <property type="entry name" value="PHOSPHOENOLPYRUVATE CARBOXYLASE FAMILY PROTEIN"/>
    <property type="match status" value="1"/>
</dbReference>
<dbReference type="Pfam" id="PF03328">
    <property type="entry name" value="HpcH_HpaI"/>
    <property type="match status" value="1"/>
</dbReference>
<dbReference type="SUPFAM" id="SSF51621">
    <property type="entry name" value="Phosphoenolpyruvate/pyruvate domain"/>
    <property type="match status" value="1"/>
</dbReference>